<sequence>MAKGPRYKVPRRRRREGKTNYYKRYRMIVSGHPRFIVRKTLNYIWVQVATARPEGDVIIAAAHSNELRKRFGWKAGTCNTSAAYLTGLLAALRALEKGVEYAVPDIGLHRPVKGALVFAAIKAANDAGLKVPMGGEVAPSEERIRGEHIASYAKILRENGLLEKRFSRYLANGLQPEDLPSHFEEVKNKILEAYKR</sequence>
<protein>
    <recommendedName>
        <fullName evidence="1">Large ribosomal subunit protein uL18</fullName>
    </recommendedName>
    <alternativeName>
        <fullName evidence="2">50S ribosomal protein L18</fullName>
    </alternativeName>
</protein>
<reference key="1">
    <citation type="journal article" date="2009" name="J. Bacteriol.">
        <title>Complete genome sequence of the anaerobic, protein-degrading hyperthermophilic crenarchaeon Desulfurococcus kamchatkensis.</title>
        <authorList>
            <person name="Ravin N.V."/>
            <person name="Mardanov A.V."/>
            <person name="Beletsky A.V."/>
            <person name="Kublanov I.V."/>
            <person name="Kolganova T.V."/>
            <person name="Lebedinsky A.V."/>
            <person name="Chernyh N.A."/>
            <person name="Bonch-Osmolovskaya E.A."/>
            <person name="Skryabin K.G."/>
        </authorList>
    </citation>
    <scope>NUCLEOTIDE SEQUENCE [LARGE SCALE GENOMIC DNA]</scope>
    <source>
        <strain>DSM 18924 / JCM 16383 / VKM B-2413 / 1221n</strain>
    </source>
</reference>
<proteinExistence type="inferred from homology"/>
<keyword id="KW-0687">Ribonucleoprotein</keyword>
<keyword id="KW-0689">Ribosomal protein</keyword>
<keyword id="KW-0694">RNA-binding</keyword>
<keyword id="KW-0699">rRNA-binding</keyword>
<gene>
    <name evidence="1" type="primary">rpl18</name>
    <name type="ordered locus">DKAM_1156</name>
</gene>
<feature type="chain" id="PRO_1000166226" description="Large ribosomal subunit protein uL18">
    <location>
        <begin position="1"/>
        <end position="196"/>
    </location>
</feature>
<accession>B8D5V1</accession>
<comment type="function">
    <text evidence="1">This is one of the proteins that bind and probably mediate the attachment of the 5S RNA into the large ribosomal subunit, where it forms part of the central protuberance.</text>
</comment>
<comment type="subunit">
    <text evidence="1">Part of the 50S ribosomal subunit. Contacts the 5S and 23S rRNAs.</text>
</comment>
<comment type="similarity">
    <text evidence="1">Belongs to the universal ribosomal protein uL18 family.</text>
</comment>
<name>RL18_DESA1</name>
<organism>
    <name type="scientific">Desulfurococcus amylolyticus (strain DSM 18924 / JCM 16383 / VKM B-2413 / 1221n)</name>
    <name type="common">Desulfurococcus kamchatkensis</name>
    <dbReference type="NCBI Taxonomy" id="490899"/>
    <lineage>
        <taxon>Archaea</taxon>
        <taxon>Thermoproteota</taxon>
        <taxon>Thermoprotei</taxon>
        <taxon>Desulfurococcales</taxon>
        <taxon>Desulfurococcaceae</taxon>
        <taxon>Desulfurococcus</taxon>
    </lineage>
</organism>
<dbReference type="EMBL" id="CP001140">
    <property type="protein sequence ID" value="ACL11482.1"/>
    <property type="molecule type" value="Genomic_DNA"/>
</dbReference>
<dbReference type="RefSeq" id="WP_012608823.1">
    <property type="nucleotide sequence ID" value="NC_011766.1"/>
</dbReference>
<dbReference type="SMR" id="B8D5V1"/>
<dbReference type="STRING" id="490899.DKAM_1156"/>
<dbReference type="GeneID" id="7171245"/>
<dbReference type="KEGG" id="dka:DKAM_1156"/>
<dbReference type="eggNOG" id="arCOG04088">
    <property type="taxonomic scope" value="Archaea"/>
</dbReference>
<dbReference type="HOGENOM" id="CLU_056222_2_0_2"/>
<dbReference type="Proteomes" id="UP000006903">
    <property type="component" value="Chromosome"/>
</dbReference>
<dbReference type="GO" id="GO:0022625">
    <property type="term" value="C:cytosolic large ribosomal subunit"/>
    <property type="evidence" value="ECO:0007669"/>
    <property type="project" value="TreeGrafter"/>
</dbReference>
<dbReference type="GO" id="GO:0008097">
    <property type="term" value="F:5S rRNA binding"/>
    <property type="evidence" value="ECO:0007669"/>
    <property type="project" value="InterPro"/>
</dbReference>
<dbReference type="GO" id="GO:0003735">
    <property type="term" value="F:structural constituent of ribosome"/>
    <property type="evidence" value="ECO:0007669"/>
    <property type="project" value="InterPro"/>
</dbReference>
<dbReference type="GO" id="GO:0000027">
    <property type="term" value="P:ribosomal large subunit assembly"/>
    <property type="evidence" value="ECO:0007669"/>
    <property type="project" value="TreeGrafter"/>
</dbReference>
<dbReference type="GO" id="GO:0006412">
    <property type="term" value="P:translation"/>
    <property type="evidence" value="ECO:0007669"/>
    <property type="project" value="UniProtKB-UniRule"/>
</dbReference>
<dbReference type="CDD" id="cd00432">
    <property type="entry name" value="Ribosomal_L18_L5e"/>
    <property type="match status" value="1"/>
</dbReference>
<dbReference type="Gene3D" id="3.30.420.100">
    <property type="match status" value="1"/>
</dbReference>
<dbReference type="HAMAP" id="MF_01337_A">
    <property type="entry name" value="Ribosomal_uL18_A"/>
    <property type="match status" value="1"/>
</dbReference>
<dbReference type="InterPro" id="IPR005485">
    <property type="entry name" value="Rbsml_uL18_euk"/>
</dbReference>
<dbReference type="NCBIfam" id="NF006342">
    <property type="entry name" value="PRK08569.1"/>
    <property type="match status" value="1"/>
</dbReference>
<dbReference type="PANTHER" id="PTHR23410:SF12">
    <property type="entry name" value="LARGE RIBOSOMAL SUBUNIT PROTEIN UL18"/>
    <property type="match status" value="1"/>
</dbReference>
<dbReference type="PANTHER" id="PTHR23410">
    <property type="entry name" value="RIBOSOMAL PROTEIN L5-RELATED"/>
    <property type="match status" value="1"/>
</dbReference>
<dbReference type="Pfam" id="PF17144">
    <property type="entry name" value="Ribosomal_L5e"/>
    <property type="match status" value="1"/>
</dbReference>
<dbReference type="SUPFAM" id="SSF53137">
    <property type="entry name" value="Translational machinery components"/>
    <property type="match status" value="1"/>
</dbReference>
<evidence type="ECO:0000255" key="1">
    <source>
        <dbReference type="HAMAP-Rule" id="MF_01337"/>
    </source>
</evidence>
<evidence type="ECO:0000305" key="2"/>